<proteinExistence type="inferred from homology"/>
<protein>
    <recommendedName>
        <fullName>Homeobox protein knotted-1-like 11</fullName>
    </recommendedName>
</protein>
<name>KNX11_MAIZE</name>
<organism>
    <name type="scientific">Zea mays</name>
    <name type="common">Maize</name>
    <dbReference type="NCBI Taxonomy" id="4577"/>
    <lineage>
        <taxon>Eukaryota</taxon>
        <taxon>Viridiplantae</taxon>
        <taxon>Streptophyta</taxon>
        <taxon>Embryophyta</taxon>
        <taxon>Tracheophyta</taxon>
        <taxon>Spermatophyta</taxon>
        <taxon>Magnoliopsida</taxon>
        <taxon>Liliopsida</taxon>
        <taxon>Poales</taxon>
        <taxon>Poaceae</taxon>
        <taxon>PACMAD clade</taxon>
        <taxon>Panicoideae</taxon>
        <taxon>Andropogonodae</taxon>
        <taxon>Andropogoneae</taxon>
        <taxon>Tripsacinae</taxon>
        <taxon>Zea</taxon>
    </lineage>
</organism>
<reference key="1">
    <citation type="journal article" date="1994" name="Plant Cell">
        <title>Sequence analysis and expression patterns divide the Maize knotted1-like homeobox genes into two classes.</title>
        <authorList>
            <person name="Kerstetter R."/>
            <person name="Vollbrecht E."/>
            <person name="Lowe B."/>
            <person name="Veit B."/>
            <person name="Yamaguchi J."/>
            <person name="Hake S."/>
        </authorList>
    </citation>
    <scope>NUCLEOTIDE SEQUENCE</scope>
    <source>
        <tissue>Ear of corn</tissue>
        <tissue>Seedling</tissue>
    </source>
</reference>
<accession>P56668</accession>
<sequence length="88" mass="10657">ADRELKEMLLKKYSGCLSRLRSEFLKKRKKGKLPKDARSALMDWWNTHYRWPYPTEEDKVRLAAATGLDPKQINNWFINQRKRHWKPS</sequence>
<gene>
    <name type="primary">KNOX11</name>
</gene>
<dbReference type="SMR" id="P56668"/>
<dbReference type="STRING" id="4577.P56668"/>
<dbReference type="PaxDb" id="4577-GRMZM2G094241_P01"/>
<dbReference type="eggNOG" id="KOG0773">
    <property type="taxonomic scope" value="Eukaryota"/>
</dbReference>
<dbReference type="InParanoid" id="P56668"/>
<dbReference type="Proteomes" id="UP000007305">
    <property type="component" value="Unplaced"/>
</dbReference>
<dbReference type="ExpressionAtlas" id="P56668">
    <property type="expression patterns" value="baseline"/>
</dbReference>
<dbReference type="GO" id="GO:0005634">
    <property type="term" value="C:nucleus"/>
    <property type="evidence" value="ECO:0000318"/>
    <property type="project" value="GO_Central"/>
</dbReference>
<dbReference type="GO" id="GO:0003677">
    <property type="term" value="F:DNA binding"/>
    <property type="evidence" value="ECO:0007669"/>
    <property type="project" value="UniProtKB-KW"/>
</dbReference>
<dbReference type="GO" id="GO:0000981">
    <property type="term" value="F:DNA-binding transcription factor activity, RNA polymerase II-specific"/>
    <property type="evidence" value="ECO:0007669"/>
    <property type="project" value="InterPro"/>
</dbReference>
<dbReference type="CDD" id="cd00086">
    <property type="entry name" value="homeodomain"/>
    <property type="match status" value="1"/>
</dbReference>
<dbReference type="Gene3D" id="1.10.10.60">
    <property type="entry name" value="Homeodomain-like"/>
    <property type="match status" value="1"/>
</dbReference>
<dbReference type="InterPro" id="IPR005539">
    <property type="entry name" value="ELK_dom"/>
</dbReference>
<dbReference type="InterPro" id="IPR001356">
    <property type="entry name" value="HD"/>
</dbReference>
<dbReference type="InterPro" id="IPR017970">
    <property type="entry name" value="Homeobox_CS"/>
</dbReference>
<dbReference type="InterPro" id="IPR009057">
    <property type="entry name" value="Homeodomain-like_sf"/>
</dbReference>
<dbReference type="InterPro" id="IPR008422">
    <property type="entry name" value="KN_HD"/>
</dbReference>
<dbReference type="InterPro" id="IPR050224">
    <property type="entry name" value="TALE_homeobox"/>
</dbReference>
<dbReference type="PANTHER" id="PTHR11850">
    <property type="entry name" value="HOMEOBOX PROTEIN TRANSCRIPTION FACTORS"/>
    <property type="match status" value="1"/>
</dbReference>
<dbReference type="Pfam" id="PF03789">
    <property type="entry name" value="ELK"/>
    <property type="match status" value="1"/>
</dbReference>
<dbReference type="Pfam" id="PF05920">
    <property type="entry name" value="Homeobox_KN"/>
    <property type="match status" value="1"/>
</dbReference>
<dbReference type="SMART" id="SM01188">
    <property type="entry name" value="ELK"/>
    <property type="match status" value="1"/>
</dbReference>
<dbReference type="SMART" id="SM00389">
    <property type="entry name" value="HOX"/>
    <property type="match status" value="1"/>
</dbReference>
<dbReference type="SUPFAM" id="SSF46689">
    <property type="entry name" value="Homeodomain-like"/>
    <property type="match status" value="1"/>
</dbReference>
<dbReference type="PROSITE" id="PS51213">
    <property type="entry name" value="ELK"/>
    <property type="match status" value="1"/>
</dbReference>
<dbReference type="PROSITE" id="PS00027">
    <property type="entry name" value="HOMEOBOX_1"/>
    <property type="match status" value="1"/>
</dbReference>
<dbReference type="PROSITE" id="PS50071">
    <property type="entry name" value="HOMEOBOX_2"/>
    <property type="match status" value="1"/>
</dbReference>
<evidence type="ECO:0000255" key="1">
    <source>
        <dbReference type="PROSITE-ProRule" id="PRU00108"/>
    </source>
</evidence>
<evidence type="ECO:0000255" key="2">
    <source>
        <dbReference type="PROSITE-ProRule" id="PRU00559"/>
    </source>
</evidence>
<evidence type="ECO:0000305" key="3"/>
<keyword id="KW-0238">DNA-binding</keyword>
<keyword id="KW-0371">Homeobox</keyword>
<keyword id="KW-0539">Nucleus</keyword>
<keyword id="KW-1185">Reference proteome</keyword>
<feature type="chain" id="PRO_0000048971" description="Homeobox protein knotted-1-like 11">
    <location>
        <begin position="1" status="less than"/>
        <end position="88" status="greater than"/>
    </location>
</feature>
<feature type="domain" description="ELK" evidence="2">
    <location>
        <begin position="4"/>
        <end position="24"/>
    </location>
</feature>
<feature type="DNA-binding region" description="Homeobox; TALE-type" evidence="1">
    <location>
        <begin position="25"/>
        <end position="88"/>
    </location>
</feature>
<feature type="non-terminal residue">
    <location>
        <position position="1"/>
    </location>
</feature>
<feature type="non-terminal residue">
    <location>
        <position position="88"/>
    </location>
</feature>
<comment type="function">
    <text>Probably binds to the DNA sequence 5'-TGAC-3'.</text>
</comment>
<comment type="subcellular location">
    <subcellularLocation>
        <location evidence="3">Nucleus</location>
    </subcellularLocation>
</comment>
<comment type="similarity">
    <text evidence="2">Belongs to the TALE/KNOX homeobox family.</text>
</comment>